<evidence type="ECO:0000250" key="1">
    <source>
        <dbReference type="UniProtKB" id="P9WP65"/>
    </source>
</evidence>
<evidence type="ECO:0000250" key="2">
    <source>
        <dbReference type="UniProtKB" id="Q6XBH1"/>
    </source>
</evidence>
<evidence type="ECO:0000305" key="3"/>
<name>CNPD3_MORCB</name>
<keyword id="KW-0378">Hydrolase</keyword>
<keyword id="KW-0408">Iron</keyword>
<keyword id="KW-0479">Metal-binding</keyword>
<keyword id="KW-0547">Nucleotide-binding</keyword>
<organism>
    <name type="scientific">Moraxella catarrhalis (strain BBH18)</name>
    <dbReference type="NCBI Taxonomy" id="1236608"/>
    <lineage>
        <taxon>Bacteria</taxon>
        <taxon>Pseudomonadati</taxon>
        <taxon>Pseudomonadota</taxon>
        <taxon>Gammaproteobacteria</taxon>
        <taxon>Moraxellales</taxon>
        <taxon>Moraxellaceae</taxon>
        <taxon>Moraxella</taxon>
    </lineage>
</organism>
<dbReference type="EC" id="3.1.4.-" evidence="1"/>
<dbReference type="EMBL" id="CP002005">
    <property type="protein sequence ID" value="ADG60641.1"/>
    <property type="molecule type" value="Genomic_DNA"/>
</dbReference>
<dbReference type="RefSeq" id="WP_003660880.1">
    <property type="nucleotide sequence ID" value="NC_014147.1"/>
</dbReference>
<dbReference type="SMR" id="D5VAD8"/>
<dbReference type="STRING" id="1236608.MCR_0369"/>
<dbReference type="KEGG" id="mct:MCR_0369"/>
<dbReference type="PATRIC" id="fig|1236608.7.peg.385"/>
<dbReference type="HOGENOM" id="CLU_070320_0_0_6"/>
<dbReference type="GO" id="GO:0004115">
    <property type="term" value="F:3',5'-cyclic-AMP phosphodiesterase activity"/>
    <property type="evidence" value="ECO:0007669"/>
    <property type="project" value="UniProtKB-EC"/>
</dbReference>
<dbReference type="GO" id="GO:0046872">
    <property type="term" value="F:metal ion binding"/>
    <property type="evidence" value="ECO:0007669"/>
    <property type="project" value="UniProtKB-KW"/>
</dbReference>
<dbReference type="GO" id="GO:0000166">
    <property type="term" value="F:nucleotide binding"/>
    <property type="evidence" value="ECO:0007669"/>
    <property type="project" value="UniProtKB-KW"/>
</dbReference>
<dbReference type="Gene3D" id="3.60.21.10">
    <property type="match status" value="1"/>
</dbReference>
<dbReference type="InterPro" id="IPR004843">
    <property type="entry name" value="Calcineurin-like_PHP_ApaH"/>
</dbReference>
<dbReference type="InterPro" id="IPR050884">
    <property type="entry name" value="CNP_phosphodiesterase-III"/>
</dbReference>
<dbReference type="InterPro" id="IPR029052">
    <property type="entry name" value="Metallo-depent_PP-like"/>
</dbReference>
<dbReference type="PANTHER" id="PTHR42988:SF2">
    <property type="entry name" value="CYCLIC NUCLEOTIDE PHOSPHODIESTERASE CBUA0032-RELATED"/>
    <property type="match status" value="1"/>
</dbReference>
<dbReference type="PANTHER" id="PTHR42988">
    <property type="entry name" value="PHOSPHOHYDROLASE"/>
    <property type="match status" value="1"/>
</dbReference>
<dbReference type="Pfam" id="PF00149">
    <property type="entry name" value="Metallophos"/>
    <property type="match status" value="1"/>
</dbReference>
<dbReference type="SUPFAM" id="SSF56300">
    <property type="entry name" value="Metallo-dependent phosphatases"/>
    <property type="match status" value="1"/>
</dbReference>
<protein>
    <recommendedName>
        <fullName evidence="1">Probable cyclic nucleotide phosphodiesterase MCR_0369</fullName>
        <ecNumber evidence="1">3.1.4.-</ecNumber>
    </recommendedName>
</protein>
<feature type="chain" id="PRO_0000413369" description="Probable cyclic nucleotide phosphodiesterase MCR_0369">
    <location>
        <begin position="1"/>
        <end position="277"/>
    </location>
</feature>
<feature type="binding site" evidence="2">
    <location>
        <position position="17"/>
    </location>
    <ligand>
        <name>Fe cation</name>
        <dbReference type="ChEBI" id="CHEBI:24875"/>
        <label>1</label>
    </ligand>
</feature>
<feature type="binding site" evidence="1">
    <location>
        <position position="19"/>
    </location>
    <ligand>
        <name>AMP</name>
        <dbReference type="ChEBI" id="CHEBI:456215"/>
    </ligand>
</feature>
<feature type="binding site" evidence="2">
    <location>
        <position position="19"/>
    </location>
    <ligand>
        <name>Fe cation</name>
        <dbReference type="ChEBI" id="CHEBI:24875"/>
        <label>1</label>
    </ligand>
</feature>
<feature type="binding site" evidence="1">
    <location>
        <position position="53"/>
    </location>
    <ligand>
        <name>AMP</name>
        <dbReference type="ChEBI" id="CHEBI:456215"/>
    </ligand>
</feature>
<feature type="binding site" evidence="2">
    <location>
        <position position="53"/>
    </location>
    <ligand>
        <name>Fe cation</name>
        <dbReference type="ChEBI" id="CHEBI:24875"/>
        <label>1</label>
    </ligand>
</feature>
<feature type="binding site" evidence="2">
    <location>
        <position position="53"/>
    </location>
    <ligand>
        <name>Fe cation</name>
        <dbReference type="ChEBI" id="CHEBI:24875"/>
        <label>2</label>
    </ligand>
</feature>
<feature type="binding site" evidence="1">
    <location>
        <begin position="83"/>
        <end position="84"/>
    </location>
    <ligand>
        <name>AMP</name>
        <dbReference type="ChEBI" id="CHEBI:456215"/>
    </ligand>
</feature>
<feature type="binding site" evidence="2">
    <location>
        <position position="83"/>
    </location>
    <ligand>
        <name>Fe cation</name>
        <dbReference type="ChEBI" id="CHEBI:24875"/>
        <label>2</label>
    </ligand>
</feature>
<feature type="binding site" evidence="2">
    <location>
        <position position="165"/>
    </location>
    <ligand>
        <name>Fe cation</name>
        <dbReference type="ChEBI" id="CHEBI:24875"/>
        <label>2</label>
    </ligand>
</feature>
<feature type="binding site" evidence="2">
    <location>
        <position position="204"/>
    </location>
    <ligand>
        <name>Fe cation</name>
        <dbReference type="ChEBI" id="CHEBI:24875"/>
        <label>2</label>
    </ligand>
</feature>
<feature type="binding site" evidence="1">
    <location>
        <position position="206"/>
    </location>
    <ligand>
        <name>AMP</name>
        <dbReference type="ChEBI" id="CHEBI:456215"/>
    </ligand>
</feature>
<feature type="binding site" evidence="2">
    <location>
        <position position="206"/>
    </location>
    <ligand>
        <name>Fe cation</name>
        <dbReference type="ChEBI" id="CHEBI:24875"/>
        <label>1</label>
    </ligand>
</feature>
<sequence length="277" mass="31630">MPNITNNHTFNIVQLSDLHLTGDIGQAPSYQRFLAVFQTAKHLNPDLWLLTGDLVNDGNSDAYDWLFNQLQATKIPYLAVAGNHDVTHEIGIHLAHQERIHVPILPDRRLKNCFRYTFQAGHDWQILLLNSSVSGEIFGLLTHETLLWLDQTLTTHFEQTIIALHHHPTKVSSDWIDAHLLKNHQDFWHVIKKHAHVHTILCGHVHQVHTLHPLPAHQVQLLSCPSTDRQFMPFVDNFQIADTPAGCRMIQIDNKGIVSSYIQIVQNTHSFCLNNAN</sequence>
<reference key="1">
    <citation type="journal article" date="2010" name="J. Bacteriol.">
        <title>Genome analysis of Moraxella catarrhalis strain RH4, a human respiratory tract pathogen.</title>
        <authorList>
            <person name="de Vries S.P."/>
            <person name="van Hijum S.A."/>
            <person name="Schueler W."/>
            <person name="Riesbeck K."/>
            <person name="Hays J.P."/>
            <person name="Hermans P.W."/>
            <person name="Bootsma H.J."/>
        </authorList>
    </citation>
    <scope>NUCLEOTIDE SEQUENCE [LARGE SCALE GENOMIC DNA]</scope>
    <source>
        <strain>BBH18</strain>
    </source>
</reference>
<proteinExistence type="inferred from homology"/>
<accession>D5VAD8</accession>
<comment type="cofactor">
    <cofactor evidence="2">
        <name>Fe(2+)</name>
        <dbReference type="ChEBI" id="CHEBI:29033"/>
    </cofactor>
    <text evidence="2">Binds 2 Fe(2+) ions per subunit.</text>
</comment>
<comment type="similarity">
    <text evidence="3">Belongs to the cyclic nucleotide phosphodiesterase class-III family.</text>
</comment>
<gene>
    <name type="ordered locus">MCR_0369</name>
</gene>